<sequence>MIQQESRLKVADNSGAREILTIKVLGGSGRKFANIGDVIVATVKQATPGGAVKKGDVVKAVIVRTKTGARRSDGSYIKFDDNAAVIIRDDKTPRGTRIFGPVARELREGGYMRIVSLAPEVL</sequence>
<dbReference type="EMBL" id="CP000419">
    <property type="protein sequence ID" value="ABJ67011.1"/>
    <property type="molecule type" value="Genomic_DNA"/>
</dbReference>
<dbReference type="RefSeq" id="WP_002952155.1">
    <property type="nucleotide sequence ID" value="NZ_CP086001.1"/>
</dbReference>
<dbReference type="SMR" id="Q03IG1"/>
<dbReference type="GeneID" id="66899652"/>
<dbReference type="KEGG" id="ste:STER_1897"/>
<dbReference type="HOGENOM" id="CLU_095071_2_1_9"/>
<dbReference type="GO" id="GO:0022625">
    <property type="term" value="C:cytosolic large ribosomal subunit"/>
    <property type="evidence" value="ECO:0007669"/>
    <property type="project" value="TreeGrafter"/>
</dbReference>
<dbReference type="GO" id="GO:0070180">
    <property type="term" value="F:large ribosomal subunit rRNA binding"/>
    <property type="evidence" value="ECO:0007669"/>
    <property type="project" value="TreeGrafter"/>
</dbReference>
<dbReference type="GO" id="GO:0003735">
    <property type="term" value="F:structural constituent of ribosome"/>
    <property type="evidence" value="ECO:0007669"/>
    <property type="project" value="InterPro"/>
</dbReference>
<dbReference type="GO" id="GO:0006412">
    <property type="term" value="P:translation"/>
    <property type="evidence" value="ECO:0007669"/>
    <property type="project" value="UniProtKB-UniRule"/>
</dbReference>
<dbReference type="CDD" id="cd00337">
    <property type="entry name" value="Ribosomal_uL14"/>
    <property type="match status" value="1"/>
</dbReference>
<dbReference type="FunFam" id="2.40.150.20:FF:000001">
    <property type="entry name" value="50S ribosomal protein L14"/>
    <property type="match status" value="1"/>
</dbReference>
<dbReference type="Gene3D" id="2.40.150.20">
    <property type="entry name" value="Ribosomal protein L14"/>
    <property type="match status" value="1"/>
</dbReference>
<dbReference type="HAMAP" id="MF_01367">
    <property type="entry name" value="Ribosomal_uL14"/>
    <property type="match status" value="1"/>
</dbReference>
<dbReference type="InterPro" id="IPR000218">
    <property type="entry name" value="Ribosomal_uL14"/>
</dbReference>
<dbReference type="InterPro" id="IPR005745">
    <property type="entry name" value="Ribosomal_uL14_bac-type"/>
</dbReference>
<dbReference type="InterPro" id="IPR019972">
    <property type="entry name" value="Ribosomal_uL14_CS"/>
</dbReference>
<dbReference type="InterPro" id="IPR036853">
    <property type="entry name" value="Ribosomal_uL14_sf"/>
</dbReference>
<dbReference type="NCBIfam" id="TIGR01067">
    <property type="entry name" value="rplN_bact"/>
    <property type="match status" value="1"/>
</dbReference>
<dbReference type="PANTHER" id="PTHR11761">
    <property type="entry name" value="50S/60S RIBOSOMAL PROTEIN L14/L23"/>
    <property type="match status" value="1"/>
</dbReference>
<dbReference type="PANTHER" id="PTHR11761:SF3">
    <property type="entry name" value="LARGE RIBOSOMAL SUBUNIT PROTEIN UL14M"/>
    <property type="match status" value="1"/>
</dbReference>
<dbReference type="Pfam" id="PF00238">
    <property type="entry name" value="Ribosomal_L14"/>
    <property type="match status" value="1"/>
</dbReference>
<dbReference type="SMART" id="SM01374">
    <property type="entry name" value="Ribosomal_L14"/>
    <property type="match status" value="1"/>
</dbReference>
<dbReference type="SUPFAM" id="SSF50193">
    <property type="entry name" value="Ribosomal protein L14"/>
    <property type="match status" value="1"/>
</dbReference>
<dbReference type="PROSITE" id="PS00049">
    <property type="entry name" value="RIBOSOMAL_L14"/>
    <property type="match status" value="1"/>
</dbReference>
<gene>
    <name evidence="1" type="primary">rplN</name>
    <name type="ordered locus">STER_1897</name>
</gene>
<evidence type="ECO:0000255" key="1">
    <source>
        <dbReference type="HAMAP-Rule" id="MF_01367"/>
    </source>
</evidence>
<evidence type="ECO:0000305" key="2"/>
<feature type="chain" id="PRO_1000055730" description="Large ribosomal subunit protein uL14">
    <location>
        <begin position="1"/>
        <end position="122"/>
    </location>
</feature>
<reference key="1">
    <citation type="journal article" date="2006" name="Proc. Natl. Acad. Sci. U.S.A.">
        <title>Comparative genomics of the lactic acid bacteria.</title>
        <authorList>
            <person name="Makarova K.S."/>
            <person name="Slesarev A."/>
            <person name="Wolf Y.I."/>
            <person name="Sorokin A."/>
            <person name="Mirkin B."/>
            <person name="Koonin E.V."/>
            <person name="Pavlov A."/>
            <person name="Pavlova N."/>
            <person name="Karamychev V."/>
            <person name="Polouchine N."/>
            <person name="Shakhova V."/>
            <person name="Grigoriev I."/>
            <person name="Lou Y."/>
            <person name="Rohksar D."/>
            <person name="Lucas S."/>
            <person name="Huang K."/>
            <person name="Goodstein D.M."/>
            <person name="Hawkins T."/>
            <person name="Plengvidhya V."/>
            <person name="Welker D."/>
            <person name="Hughes J."/>
            <person name="Goh Y."/>
            <person name="Benson A."/>
            <person name="Baldwin K."/>
            <person name="Lee J.-H."/>
            <person name="Diaz-Muniz I."/>
            <person name="Dosti B."/>
            <person name="Smeianov V."/>
            <person name="Wechter W."/>
            <person name="Barabote R."/>
            <person name="Lorca G."/>
            <person name="Altermann E."/>
            <person name="Barrangou R."/>
            <person name="Ganesan B."/>
            <person name="Xie Y."/>
            <person name="Rawsthorne H."/>
            <person name="Tamir D."/>
            <person name="Parker C."/>
            <person name="Breidt F."/>
            <person name="Broadbent J.R."/>
            <person name="Hutkins R."/>
            <person name="O'Sullivan D."/>
            <person name="Steele J."/>
            <person name="Unlu G."/>
            <person name="Saier M.H. Jr."/>
            <person name="Klaenhammer T."/>
            <person name="Richardson P."/>
            <person name="Kozyavkin S."/>
            <person name="Weimer B.C."/>
            <person name="Mills D.A."/>
        </authorList>
    </citation>
    <scope>NUCLEOTIDE SEQUENCE [LARGE SCALE GENOMIC DNA]</scope>
    <source>
        <strain>ATCC BAA-491 / LMD-9</strain>
    </source>
</reference>
<proteinExistence type="inferred from homology"/>
<comment type="function">
    <text evidence="1">Binds to 23S rRNA. Forms part of two intersubunit bridges in the 70S ribosome.</text>
</comment>
<comment type="subunit">
    <text evidence="1">Part of the 50S ribosomal subunit. Forms a cluster with proteins L3 and L19. In the 70S ribosome, L14 and L19 interact and together make contacts with the 16S rRNA in bridges B5 and B8.</text>
</comment>
<comment type="similarity">
    <text evidence="1">Belongs to the universal ribosomal protein uL14 family.</text>
</comment>
<protein>
    <recommendedName>
        <fullName evidence="1">Large ribosomal subunit protein uL14</fullName>
    </recommendedName>
    <alternativeName>
        <fullName evidence="2">50S ribosomal protein L14</fullName>
    </alternativeName>
</protein>
<accession>Q03IG1</accession>
<organism>
    <name type="scientific">Streptococcus thermophilus (strain ATCC BAA-491 / LMD-9)</name>
    <dbReference type="NCBI Taxonomy" id="322159"/>
    <lineage>
        <taxon>Bacteria</taxon>
        <taxon>Bacillati</taxon>
        <taxon>Bacillota</taxon>
        <taxon>Bacilli</taxon>
        <taxon>Lactobacillales</taxon>
        <taxon>Streptococcaceae</taxon>
        <taxon>Streptococcus</taxon>
    </lineage>
</organism>
<name>RL14_STRTD</name>
<keyword id="KW-0687">Ribonucleoprotein</keyword>
<keyword id="KW-0689">Ribosomal protein</keyword>
<keyword id="KW-0694">RNA-binding</keyword>
<keyword id="KW-0699">rRNA-binding</keyword>